<proteinExistence type="inferred from homology"/>
<dbReference type="EC" id="2.1.1.-" evidence="1"/>
<dbReference type="EMBL" id="CP001407">
    <property type="protein sequence ID" value="ACO30150.1"/>
    <property type="molecule type" value="Genomic_DNA"/>
</dbReference>
<dbReference type="RefSeq" id="WP_000872105.1">
    <property type="nucleotide sequence ID" value="NZ_CP009318.1"/>
</dbReference>
<dbReference type="SMR" id="C1ESK6"/>
<dbReference type="GeneID" id="45024189"/>
<dbReference type="KEGG" id="bcx:BCA_4423"/>
<dbReference type="PATRIC" id="fig|572264.18.peg.4371"/>
<dbReference type="Proteomes" id="UP000002210">
    <property type="component" value="Chromosome"/>
</dbReference>
<dbReference type="GO" id="GO:0005737">
    <property type="term" value="C:cytoplasm"/>
    <property type="evidence" value="ECO:0007669"/>
    <property type="project" value="UniProtKB-SubCell"/>
</dbReference>
<dbReference type="GO" id="GO:0016279">
    <property type="term" value="F:protein-lysine N-methyltransferase activity"/>
    <property type="evidence" value="ECO:0007669"/>
    <property type="project" value="RHEA"/>
</dbReference>
<dbReference type="GO" id="GO:0032259">
    <property type="term" value="P:methylation"/>
    <property type="evidence" value="ECO:0007669"/>
    <property type="project" value="UniProtKB-KW"/>
</dbReference>
<dbReference type="CDD" id="cd02440">
    <property type="entry name" value="AdoMet_MTases"/>
    <property type="match status" value="1"/>
</dbReference>
<dbReference type="Gene3D" id="3.40.50.150">
    <property type="entry name" value="Vaccinia Virus protein VP39"/>
    <property type="match status" value="1"/>
</dbReference>
<dbReference type="HAMAP" id="MF_00735">
    <property type="entry name" value="Methyltr_PrmA"/>
    <property type="match status" value="1"/>
</dbReference>
<dbReference type="InterPro" id="IPR050078">
    <property type="entry name" value="Ribosomal_L11_MeTrfase_PrmA"/>
</dbReference>
<dbReference type="InterPro" id="IPR004498">
    <property type="entry name" value="Ribosomal_PrmA_MeTrfase"/>
</dbReference>
<dbReference type="InterPro" id="IPR029063">
    <property type="entry name" value="SAM-dependent_MTases_sf"/>
</dbReference>
<dbReference type="NCBIfam" id="TIGR00406">
    <property type="entry name" value="prmA"/>
    <property type="match status" value="1"/>
</dbReference>
<dbReference type="PANTHER" id="PTHR43648">
    <property type="entry name" value="ELECTRON TRANSFER FLAVOPROTEIN BETA SUBUNIT LYSINE METHYLTRANSFERASE"/>
    <property type="match status" value="1"/>
</dbReference>
<dbReference type="PANTHER" id="PTHR43648:SF1">
    <property type="entry name" value="ELECTRON TRANSFER FLAVOPROTEIN BETA SUBUNIT LYSINE METHYLTRANSFERASE"/>
    <property type="match status" value="1"/>
</dbReference>
<dbReference type="Pfam" id="PF06325">
    <property type="entry name" value="PrmA"/>
    <property type="match status" value="1"/>
</dbReference>
<dbReference type="PIRSF" id="PIRSF000401">
    <property type="entry name" value="RPL11_MTase"/>
    <property type="match status" value="1"/>
</dbReference>
<dbReference type="SUPFAM" id="SSF53335">
    <property type="entry name" value="S-adenosyl-L-methionine-dependent methyltransferases"/>
    <property type="match status" value="1"/>
</dbReference>
<keyword id="KW-0963">Cytoplasm</keyword>
<keyword id="KW-0489">Methyltransferase</keyword>
<keyword id="KW-0949">S-adenosyl-L-methionine</keyword>
<keyword id="KW-0808">Transferase</keyword>
<reference key="1">
    <citation type="submission" date="2009-02" db="EMBL/GenBank/DDBJ databases">
        <title>Genome sequence of Bacillus cereus 03BB102.</title>
        <authorList>
            <person name="Dodson R.J."/>
            <person name="Jackson P."/>
            <person name="Munk A.C."/>
            <person name="Brettin T."/>
            <person name="Bruce D."/>
            <person name="Detter C."/>
            <person name="Tapia R."/>
            <person name="Han C."/>
            <person name="Sutton G."/>
            <person name="Sims D."/>
        </authorList>
    </citation>
    <scope>NUCLEOTIDE SEQUENCE [LARGE SCALE GENOMIC DNA]</scope>
    <source>
        <strain>03BB102</strain>
    </source>
</reference>
<gene>
    <name evidence="1" type="primary">prmA</name>
    <name type="ordered locus">BCA_4423</name>
</gene>
<sequence>MKWSEISIHTTEEAVEAVSHILHEAGASGVAIEDPAELTKEREQQYGEIYALNPDEYPAEGVLIKAYFPQTDSLHETIAGVKSSIDVLPSYDIEIGTGNITVNEVNEEDWATAWKKYYHPVQISDTFTIVPTWEEYTPSSPEEKIIELDPGMAFGTGTHPTTTMCIRALEKTVQPGDTIIDVGTGSGVLSIAAAKLGASSVQAYDLDPVAVESAEMNVRLNKTDDVVSVGQNSLLEGIEGPVDLIVANLLAEIILLFPEDAARVVKSGGLFITSGIIAAKEKVISEALEKAGFTIEEVLRMEDWVAIIARNA</sequence>
<evidence type="ECO:0000255" key="1">
    <source>
        <dbReference type="HAMAP-Rule" id="MF_00735"/>
    </source>
</evidence>
<comment type="function">
    <text evidence="1">Methylates ribosomal protein L11.</text>
</comment>
<comment type="catalytic activity">
    <reaction evidence="1">
        <text>L-lysyl-[protein] + 3 S-adenosyl-L-methionine = N(6),N(6),N(6)-trimethyl-L-lysyl-[protein] + 3 S-adenosyl-L-homocysteine + 3 H(+)</text>
        <dbReference type="Rhea" id="RHEA:54192"/>
        <dbReference type="Rhea" id="RHEA-COMP:9752"/>
        <dbReference type="Rhea" id="RHEA-COMP:13826"/>
        <dbReference type="ChEBI" id="CHEBI:15378"/>
        <dbReference type="ChEBI" id="CHEBI:29969"/>
        <dbReference type="ChEBI" id="CHEBI:57856"/>
        <dbReference type="ChEBI" id="CHEBI:59789"/>
        <dbReference type="ChEBI" id="CHEBI:61961"/>
    </reaction>
</comment>
<comment type="subcellular location">
    <subcellularLocation>
        <location evidence="1">Cytoplasm</location>
    </subcellularLocation>
</comment>
<comment type="similarity">
    <text evidence="1">Belongs to the methyltransferase superfamily. PrmA family.</text>
</comment>
<organism>
    <name type="scientific">Bacillus cereus (strain 03BB102)</name>
    <dbReference type="NCBI Taxonomy" id="572264"/>
    <lineage>
        <taxon>Bacteria</taxon>
        <taxon>Bacillati</taxon>
        <taxon>Bacillota</taxon>
        <taxon>Bacilli</taxon>
        <taxon>Bacillales</taxon>
        <taxon>Bacillaceae</taxon>
        <taxon>Bacillus</taxon>
        <taxon>Bacillus cereus group</taxon>
    </lineage>
</organism>
<name>PRMA_BACC3</name>
<accession>C1ESK6</accession>
<feature type="chain" id="PRO_1000192579" description="Ribosomal protein L11 methyltransferase">
    <location>
        <begin position="1"/>
        <end position="312"/>
    </location>
</feature>
<feature type="binding site" evidence="1">
    <location>
        <position position="162"/>
    </location>
    <ligand>
        <name>S-adenosyl-L-methionine</name>
        <dbReference type="ChEBI" id="CHEBI:59789"/>
    </ligand>
</feature>
<feature type="binding site" evidence="1">
    <location>
        <position position="183"/>
    </location>
    <ligand>
        <name>S-adenosyl-L-methionine</name>
        <dbReference type="ChEBI" id="CHEBI:59789"/>
    </ligand>
</feature>
<feature type="binding site" evidence="1">
    <location>
        <position position="205"/>
    </location>
    <ligand>
        <name>S-adenosyl-L-methionine</name>
        <dbReference type="ChEBI" id="CHEBI:59789"/>
    </ligand>
</feature>
<feature type="binding site" evidence="1">
    <location>
        <position position="248"/>
    </location>
    <ligand>
        <name>S-adenosyl-L-methionine</name>
        <dbReference type="ChEBI" id="CHEBI:59789"/>
    </ligand>
</feature>
<protein>
    <recommendedName>
        <fullName evidence="1">Ribosomal protein L11 methyltransferase</fullName>
        <shortName evidence="1">L11 Mtase</shortName>
        <ecNumber evidence="1">2.1.1.-</ecNumber>
    </recommendedName>
</protein>